<comment type="function">
    <text evidence="1">Catalyzes the formation of methylglyoxal from dihydroxyacetone phosphate.</text>
</comment>
<comment type="catalytic activity">
    <reaction evidence="1">
        <text>dihydroxyacetone phosphate = methylglyoxal + phosphate</text>
        <dbReference type="Rhea" id="RHEA:17937"/>
        <dbReference type="ChEBI" id="CHEBI:17158"/>
        <dbReference type="ChEBI" id="CHEBI:43474"/>
        <dbReference type="ChEBI" id="CHEBI:57642"/>
        <dbReference type="EC" id="4.2.3.3"/>
    </reaction>
</comment>
<comment type="similarity">
    <text evidence="1">Belongs to the methylglyoxal synthase family.</text>
</comment>
<protein>
    <recommendedName>
        <fullName evidence="1">Methylglyoxal synthase</fullName>
        <shortName evidence="1">MGS</shortName>
        <ecNumber evidence="1">4.2.3.3</ecNumber>
    </recommendedName>
</protein>
<dbReference type="EC" id="4.2.3.3" evidence="1"/>
<dbReference type="EMBL" id="AP008232">
    <property type="protein sequence ID" value="BAE74307.1"/>
    <property type="molecule type" value="Genomic_DNA"/>
</dbReference>
<dbReference type="RefSeq" id="WP_011410892.1">
    <property type="nucleotide sequence ID" value="NC_007712.1"/>
</dbReference>
<dbReference type="SMR" id="Q2NU68"/>
<dbReference type="STRING" id="343509.SG1032"/>
<dbReference type="KEGG" id="sgl:SG1032"/>
<dbReference type="eggNOG" id="COG1803">
    <property type="taxonomic scope" value="Bacteria"/>
</dbReference>
<dbReference type="HOGENOM" id="CLU_120420_0_1_6"/>
<dbReference type="OrthoDB" id="9787147at2"/>
<dbReference type="Proteomes" id="UP000001932">
    <property type="component" value="Chromosome"/>
</dbReference>
<dbReference type="GO" id="GO:0005829">
    <property type="term" value="C:cytosol"/>
    <property type="evidence" value="ECO:0007669"/>
    <property type="project" value="TreeGrafter"/>
</dbReference>
<dbReference type="GO" id="GO:0008929">
    <property type="term" value="F:methylglyoxal synthase activity"/>
    <property type="evidence" value="ECO:0007669"/>
    <property type="project" value="UniProtKB-UniRule"/>
</dbReference>
<dbReference type="GO" id="GO:0019242">
    <property type="term" value="P:methylglyoxal biosynthetic process"/>
    <property type="evidence" value="ECO:0007669"/>
    <property type="project" value="UniProtKB-UniRule"/>
</dbReference>
<dbReference type="CDD" id="cd01422">
    <property type="entry name" value="MGS"/>
    <property type="match status" value="1"/>
</dbReference>
<dbReference type="FunFam" id="3.40.50.1380:FF:000002">
    <property type="entry name" value="Methylglyoxal synthase"/>
    <property type="match status" value="1"/>
</dbReference>
<dbReference type="Gene3D" id="3.40.50.1380">
    <property type="entry name" value="Methylglyoxal synthase-like domain"/>
    <property type="match status" value="1"/>
</dbReference>
<dbReference type="HAMAP" id="MF_00549">
    <property type="entry name" value="Methylglyoxal_synth"/>
    <property type="match status" value="1"/>
</dbReference>
<dbReference type="InterPro" id="IPR004363">
    <property type="entry name" value="Methylgl_synth"/>
</dbReference>
<dbReference type="InterPro" id="IPR018148">
    <property type="entry name" value="Methylglyoxal_synth_AS"/>
</dbReference>
<dbReference type="InterPro" id="IPR011607">
    <property type="entry name" value="MGS-like_dom"/>
</dbReference>
<dbReference type="InterPro" id="IPR036914">
    <property type="entry name" value="MGS-like_dom_sf"/>
</dbReference>
<dbReference type="NCBIfam" id="TIGR00160">
    <property type="entry name" value="MGSA"/>
    <property type="match status" value="1"/>
</dbReference>
<dbReference type="NCBIfam" id="NF003559">
    <property type="entry name" value="PRK05234.1"/>
    <property type="match status" value="1"/>
</dbReference>
<dbReference type="PANTHER" id="PTHR30492">
    <property type="entry name" value="METHYLGLYOXAL SYNTHASE"/>
    <property type="match status" value="1"/>
</dbReference>
<dbReference type="PANTHER" id="PTHR30492:SF0">
    <property type="entry name" value="METHYLGLYOXAL SYNTHASE"/>
    <property type="match status" value="1"/>
</dbReference>
<dbReference type="Pfam" id="PF02142">
    <property type="entry name" value="MGS"/>
    <property type="match status" value="1"/>
</dbReference>
<dbReference type="PIRSF" id="PIRSF006614">
    <property type="entry name" value="Methylglyox_syn"/>
    <property type="match status" value="1"/>
</dbReference>
<dbReference type="SMART" id="SM00851">
    <property type="entry name" value="MGS"/>
    <property type="match status" value="1"/>
</dbReference>
<dbReference type="SUPFAM" id="SSF52335">
    <property type="entry name" value="Methylglyoxal synthase-like"/>
    <property type="match status" value="1"/>
</dbReference>
<dbReference type="PROSITE" id="PS01335">
    <property type="entry name" value="METHYLGLYOXAL_SYNTH"/>
    <property type="match status" value="1"/>
</dbReference>
<dbReference type="PROSITE" id="PS51855">
    <property type="entry name" value="MGS"/>
    <property type="match status" value="1"/>
</dbReference>
<evidence type="ECO:0000255" key="1">
    <source>
        <dbReference type="HAMAP-Rule" id="MF_00549"/>
    </source>
</evidence>
<reference key="1">
    <citation type="journal article" date="2006" name="Genome Res.">
        <title>Massive genome erosion and functional adaptations provide insights into the symbiotic lifestyle of Sodalis glossinidius in the tsetse host.</title>
        <authorList>
            <person name="Toh H."/>
            <person name="Weiss B.L."/>
            <person name="Perkin S.A.H."/>
            <person name="Yamashita A."/>
            <person name="Oshima K."/>
            <person name="Hattori M."/>
            <person name="Aksoy S."/>
        </authorList>
    </citation>
    <scope>NUCLEOTIDE SEQUENCE [LARGE SCALE GENOMIC DNA]</scope>
    <source>
        <strain>morsitans</strain>
    </source>
</reference>
<gene>
    <name evidence="1" type="primary">mgsA</name>
    <name type="ordered locus">SG1032</name>
</gene>
<proteinExistence type="inferred from homology"/>
<name>MGSA_SODGM</name>
<organism>
    <name type="scientific">Sodalis glossinidius (strain morsitans)</name>
    <dbReference type="NCBI Taxonomy" id="343509"/>
    <lineage>
        <taxon>Bacteria</taxon>
        <taxon>Pseudomonadati</taxon>
        <taxon>Pseudomonadota</taxon>
        <taxon>Gammaproteobacteria</taxon>
        <taxon>Enterobacterales</taxon>
        <taxon>Bruguierivoracaceae</taxon>
        <taxon>Sodalis</taxon>
    </lineage>
</organism>
<sequence>MESTTRTIAARKHIALVAHDHCKQSLLDWVETNKAPLSEHVLYATGTTGNLMQLKTDLPVNSMLSGPMGGDQQVGTLISEGKIDMMIFFWDPLNAVPHDPDVKALLRLVTVWNILVATDRSTADFLISSPLFHQEVAIVIPDYQRYLAERLPS</sequence>
<keyword id="KW-0456">Lyase</keyword>
<accession>Q2NU68</accession>
<feature type="chain" id="PRO_1000017829" description="Methylglyoxal synthase">
    <location>
        <begin position="1"/>
        <end position="153"/>
    </location>
</feature>
<feature type="domain" description="MGS-like" evidence="1">
    <location>
        <begin position="6"/>
        <end position="153"/>
    </location>
</feature>
<feature type="active site" description="Proton donor/acceptor" evidence="1">
    <location>
        <position position="71"/>
    </location>
</feature>
<feature type="binding site" evidence="1">
    <location>
        <position position="19"/>
    </location>
    <ligand>
        <name>substrate</name>
    </ligand>
</feature>
<feature type="binding site" evidence="1">
    <location>
        <position position="23"/>
    </location>
    <ligand>
        <name>substrate</name>
    </ligand>
</feature>
<feature type="binding site" evidence="1">
    <location>
        <begin position="45"/>
        <end position="48"/>
    </location>
    <ligand>
        <name>substrate</name>
    </ligand>
</feature>
<feature type="binding site" evidence="1">
    <location>
        <begin position="65"/>
        <end position="66"/>
    </location>
    <ligand>
        <name>substrate</name>
    </ligand>
</feature>
<feature type="binding site" evidence="1">
    <location>
        <position position="98"/>
    </location>
    <ligand>
        <name>substrate</name>
    </ligand>
</feature>